<evidence type="ECO:0000255" key="1">
    <source>
        <dbReference type="HAMAP-Rule" id="MF_00394"/>
    </source>
</evidence>
<evidence type="ECO:0000305" key="2"/>
<feature type="chain" id="PRO_0000255365" description="Glycerol-3-phosphate dehydrogenase [NAD(P)+] 2">
    <location>
        <begin position="1"/>
        <end position="344"/>
    </location>
</feature>
<feature type="active site" description="Proton acceptor" evidence="1">
    <location>
        <position position="193"/>
    </location>
</feature>
<feature type="binding site" evidence="1">
    <location>
        <position position="12"/>
    </location>
    <ligand>
        <name>NADPH</name>
        <dbReference type="ChEBI" id="CHEBI:57783"/>
    </ligand>
</feature>
<feature type="binding site" evidence="1">
    <location>
        <position position="13"/>
    </location>
    <ligand>
        <name>NADPH</name>
        <dbReference type="ChEBI" id="CHEBI:57783"/>
    </ligand>
</feature>
<feature type="binding site" evidence="1">
    <location>
        <position position="33"/>
    </location>
    <ligand>
        <name>NADPH</name>
        <dbReference type="ChEBI" id="CHEBI:57783"/>
    </ligand>
</feature>
<feature type="binding site" evidence="1">
    <location>
        <position position="34"/>
    </location>
    <ligand>
        <name>NADPH</name>
        <dbReference type="ChEBI" id="CHEBI:57783"/>
    </ligand>
</feature>
<feature type="binding site" evidence="1">
    <location>
        <position position="107"/>
    </location>
    <ligand>
        <name>NADPH</name>
        <dbReference type="ChEBI" id="CHEBI:57783"/>
    </ligand>
</feature>
<feature type="binding site" evidence="1">
    <location>
        <position position="107"/>
    </location>
    <ligand>
        <name>sn-glycerol 3-phosphate</name>
        <dbReference type="ChEBI" id="CHEBI:57597"/>
    </ligand>
</feature>
<feature type="binding site" evidence="1">
    <location>
        <position position="138"/>
    </location>
    <ligand>
        <name>sn-glycerol 3-phosphate</name>
        <dbReference type="ChEBI" id="CHEBI:57597"/>
    </ligand>
</feature>
<feature type="binding site" evidence="1">
    <location>
        <position position="140"/>
    </location>
    <ligand>
        <name>sn-glycerol 3-phosphate</name>
        <dbReference type="ChEBI" id="CHEBI:57597"/>
    </ligand>
</feature>
<feature type="binding site" evidence="1">
    <location>
        <position position="142"/>
    </location>
    <ligand>
        <name>NADPH</name>
        <dbReference type="ChEBI" id="CHEBI:57783"/>
    </ligand>
</feature>
<feature type="binding site" evidence="1">
    <location>
        <position position="193"/>
    </location>
    <ligand>
        <name>sn-glycerol 3-phosphate</name>
        <dbReference type="ChEBI" id="CHEBI:57597"/>
    </ligand>
</feature>
<feature type="binding site" evidence="1">
    <location>
        <position position="246"/>
    </location>
    <ligand>
        <name>sn-glycerol 3-phosphate</name>
        <dbReference type="ChEBI" id="CHEBI:57597"/>
    </ligand>
</feature>
<feature type="binding site" evidence="1">
    <location>
        <position position="256"/>
    </location>
    <ligand>
        <name>sn-glycerol 3-phosphate</name>
        <dbReference type="ChEBI" id="CHEBI:57597"/>
    </ligand>
</feature>
<feature type="binding site" evidence="1">
    <location>
        <position position="257"/>
    </location>
    <ligand>
        <name>NADPH</name>
        <dbReference type="ChEBI" id="CHEBI:57783"/>
    </ligand>
</feature>
<feature type="binding site" evidence="1">
    <location>
        <position position="257"/>
    </location>
    <ligand>
        <name>sn-glycerol 3-phosphate</name>
        <dbReference type="ChEBI" id="CHEBI:57597"/>
    </ligand>
</feature>
<feature type="binding site" evidence="1">
    <location>
        <position position="258"/>
    </location>
    <ligand>
        <name>sn-glycerol 3-phosphate</name>
        <dbReference type="ChEBI" id="CHEBI:57597"/>
    </ligand>
</feature>
<feature type="binding site" evidence="1">
    <location>
        <position position="281"/>
    </location>
    <ligand>
        <name>NADPH</name>
        <dbReference type="ChEBI" id="CHEBI:57783"/>
    </ligand>
</feature>
<feature type="binding site" evidence="1">
    <location>
        <position position="283"/>
    </location>
    <ligand>
        <name>NADPH</name>
        <dbReference type="ChEBI" id="CHEBI:57783"/>
    </ligand>
</feature>
<organism>
    <name type="scientific">Salinibacter ruber (strain DSM 13855 / M31)</name>
    <dbReference type="NCBI Taxonomy" id="309807"/>
    <lineage>
        <taxon>Bacteria</taxon>
        <taxon>Pseudomonadati</taxon>
        <taxon>Rhodothermota</taxon>
        <taxon>Rhodothermia</taxon>
        <taxon>Rhodothermales</taxon>
        <taxon>Salinibacteraceae</taxon>
        <taxon>Salinibacter</taxon>
    </lineage>
</organism>
<reference key="1">
    <citation type="journal article" date="2005" name="Proc. Natl. Acad. Sci. U.S.A.">
        <title>The genome of Salinibacter ruber: convergence and gene exchange among hyperhalophilic bacteria and archaea.</title>
        <authorList>
            <person name="Mongodin E.F."/>
            <person name="Nelson K.E."/>
            <person name="Daugherty S."/>
            <person name="DeBoy R.T."/>
            <person name="Wister J."/>
            <person name="Khouri H."/>
            <person name="Weidman J."/>
            <person name="Walsh D.A."/>
            <person name="Papke R.T."/>
            <person name="Sanchez Perez G."/>
            <person name="Sharma A.K."/>
            <person name="Nesbo C.L."/>
            <person name="MacLeod D."/>
            <person name="Bapteste E."/>
            <person name="Doolittle W.F."/>
            <person name="Charlebois R.L."/>
            <person name="Legault B."/>
            <person name="Rodriguez-Valera F."/>
        </authorList>
    </citation>
    <scope>NUCLEOTIDE SEQUENCE [LARGE SCALE GENOMIC DNA]</scope>
    <source>
        <strain>DSM 13855 / CECT 5946 / M31</strain>
    </source>
</reference>
<dbReference type="EC" id="1.1.1.94" evidence="1"/>
<dbReference type="EMBL" id="CP000159">
    <property type="protein sequence ID" value="ABC45556.1"/>
    <property type="status" value="ALT_INIT"/>
    <property type="molecule type" value="Genomic_DNA"/>
</dbReference>
<dbReference type="RefSeq" id="YP_445605.1">
    <property type="nucleotide sequence ID" value="NC_007677.1"/>
</dbReference>
<dbReference type="SMR" id="Q2S2H6"/>
<dbReference type="STRING" id="309807.SRU_1481"/>
<dbReference type="EnsemblBacteria" id="ABC45556">
    <property type="protein sequence ID" value="ABC45556"/>
    <property type="gene ID" value="SRU_1481"/>
</dbReference>
<dbReference type="KEGG" id="sru:SRU_1481"/>
<dbReference type="PATRIC" id="fig|309807.25.peg.1538"/>
<dbReference type="eggNOG" id="COG0240">
    <property type="taxonomic scope" value="Bacteria"/>
</dbReference>
<dbReference type="HOGENOM" id="CLU_033449_0_2_10"/>
<dbReference type="OrthoDB" id="9812273at2"/>
<dbReference type="UniPathway" id="UPA00940"/>
<dbReference type="Proteomes" id="UP000008674">
    <property type="component" value="Chromosome"/>
</dbReference>
<dbReference type="GO" id="GO:0005829">
    <property type="term" value="C:cytosol"/>
    <property type="evidence" value="ECO:0007669"/>
    <property type="project" value="TreeGrafter"/>
</dbReference>
<dbReference type="GO" id="GO:0047952">
    <property type="term" value="F:glycerol-3-phosphate dehydrogenase [NAD(P)+] activity"/>
    <property type="evidence" value="ECO:0007669"/>
    <property type="project" value="UniProtKB-UniRule"/>
</dbReference>
<dbReference type="GO" id="GO:0051287">
    <property type="term" value="F:NAD binding"/>
    <property type="evidence" value="ECO:0007669"/>
    <property type="project" value="InterPro"/>
</dbReference>
<dbReference type="GO" id="GO:0005975">
    <property type="term" value="P:carbohydrate metabolic process"/>
    <property type="evidence" value="ECO:0007669"/>
    <property type="project" value="InterPro"/>
</dbReference>
<dbReference type="GO" id="GO:0046167">
    <property type="term" value="P:glycerol-3-phosphate biosynthetic process"/>
    <property type="evidence" value="ECO:0007669"/>
    <property type="project" value="UniProtKB-UniRule"/>
</dbReference>
<dbReference type="GO" id="GO:0046168">
    <property type="term" value="P:glycerol-3-phosphate catabolic process"/>
    <property type="evidence" value="ECO:0007669"/>
    <property type="project" value="InterPro"/>
</dbReference>
<dbReference type="GO" id="GO:0006650">
    <property type="term" value="P:glycerophospholipid metabolic process"/>
    <property type="evidence" value="ECO:0007669"/>
    <property type="project" value="UniProtKB-UniRule"/>
</dbReference>
<dbReference type="GO" id="GO:0008654">
    <property type="term" value="P:phospholipid biosynthetic process"/>
    <property type="evidence" value="ECO:0007669"/>
    <property type="project" value="UniProtKB-KW"/>
</dbReference>
<dbReference type="FunFam" id="1.10.1040.10:FF:000001">
    <property type="entry name" value="Glycerol-3-phosphate dehydrogenase [NAD(P)+]"/>
    <property type="match status" value="1"/>
</dbReference>
<dbReference type="FunFam" id="3.40.50.720:FF:000019">
    <property type="entry name" value="Glycerol-3-phosphate dehydrogenase [NAD(P)+]"/>
    <property type="match status" value="1"/>
</dbReference>
<dbReference type="Gene3D" id="1.10.1040.10">
    <property type="entry name" value="N-(1-d-carboxylethyl)-l-norvaline Dehydrogenase, domain 2"/>
    <property type="match status" value="1"/>
</dbReference>
<dbReference type="Gene3D" id="3.40.50.720">
    <property type="entry name" value="NAD(P)-binding Rossmann-like Domain"/>
    <property type="match status" value="1"/>
</dbReference>
<dbReference type="HAMAP" id="MF_00394">
    <property type="entry name" value="NAD_Glyc3P_dehydrog"/>
    <property type="match status" value="1"/>
</dbReference>
<dbReference type="InterPro" id="IPR008927">
    <property type="entry name" value="6-PGluconate_DH-like_C_sf"/>
</dbReference>
<dbReference type="InterPro" id="IPR013328">
    <property type="entry name" value="6PGD_dom2"/>
</dbReference>
<dbReference type="InterPro" id="IPR006168">
    <property type="entry name" value="G3P_DH_NAD-dep"/>
</dbReference>
<dbReference type="InterPro" id="IPR006109">
    <property type="entry name" value="G3P_DH_NAD-dep_C"/>
</dbReference>
<dbReference type="InterPro" id="IPR011128">
    <property type="entry name" value="G3P_DH_NAD-dep_N"/>
</dbReference>
<dbReference type="InterPro" id="IPR036291">
    <property type="entry name" value="NAD(P)-bd_dom_sf"/>
</dbReference>
<dbReference type="NCBIfam" id="NF000940">
    <property type="entry name" value="PRK00094.1-2"/>
    <property type="match status" value="1"/>
</dbReference>
<dbReference type="NCBIfam" id="NF000941">
    <property type="entry name" value="PRK00094.1-3"/>
    <property type="match status" value="1"/>
</dbReference>
<dbReference type="NCBIfam" id="NF000942">
    <property type="entry name" value="PRK00094.1-4"/>
    <property type="match status" value="1"/>
</dbReference>
<dbReference type="PANTHER" id="PTHR11728">
    <property type="entry name" value="GLYCEROL-3-PHOSPHATE DEHYDROGENASE"/>
    <property type="match status" value="1"/>
</dbReference>
<dbReference type="PANTHER" id="PTHR11728:SF1">
    <property type="entry name" value="GLYCEROL-3-PHOSPHATE DEHYDROGENASE [NAD(+)] 2, CHLOROPLASTIC"/>
    <property type="match status" value="1"/>
</dbReference>
<dbReference type="Pfam" id="PF07479">
    <property type="entry name" value="NAD_Gly3P_dh_C"/>
    <property type="match status" value="1"/>
</dbReference>
<dbReference type="Pfam" id="PF01210">
    <property type="entry name" value="NAD_Gly3P_dh_N"/>
    <property type="match status" value="1"/>
</dbReference>
<dbReference type="PIRSF" id="PIRSF000114">
    <property type="entry name" value="Glycerol-3-P_dh"/>
    <property type="match status" value="1"/>
</dbReference>
<dbReference type="PRINTS" id="PR00077">
    <property type="entry name" value="GPDHDRGNASE"/>
</dbReference>
<dbReference type="SUPFAM" id="SSF48179">
    <property type="entry name" value="6-phosphogluconate dehydrogenase C-terminal domain-like"/>
    <property type="match status" value="1"/>
</dbReference>
<dbReference type="SUPFAM" id="SSF51735">
    <property type="entry name" value="NAD(P)-binding Rossmann-fold domains"/>
    <property type="match status" value="1"/>
</dbReference>
<dbReference type="PROSITE" id="PS00957">
    <property type="entry name" value="NAD_G3PDH"/>
    <property type="match status" value="1"/>
</dbReference>
<comment type="function">
    <text evidence="1">Catalyzes the reduction of the glycolytic intermediate dihydroxyacetone phosphate (DHAP) to sn-glycerol 3-phosphate (G3P), the key precursor for phospholipid synthesis.</text>
</comment>
<comment type="catalytic activity">
    <reaction evidence="1">
        <text>sn-glycerol 3-phosphate + NAD(+) = dihydroxyacetone phosphate + NADH + H(+)</text>
        <dbReference type="Rhea" id="RHEA:11092"/>
        <dbReference type="ChEBI" id="CHEBI:15378"/>
        <dbReference type="ChEBI" id="CHEBI:57540"/>
        <dbReference type="ChEBI" id="CHEBI:57597"/>
        <dbReference type="ChEBI" id="CHEBI:57642"/>
        <dbReference type="ChEBI" id="CHEBI:57945"/>
        <dbReference type="EC" id="1.1.1.94"/>
    </reaction>
    <physiologicalReaction direction="right-to-left" evidence="1">
        <dbReference type="Rhea" id="RHEA:11094"/>
    </physiologicalReaction>
</comment>
<comment type="catalytic activity">
    <reaction evidence="1">
        <text>sn-glycerol 3-phosphate + NADP(+) = dihydroxyacetone phosphate + NADPH + H(+)</text>
        <dbReference type="Rhea" id="RHEA:11096"/>
        <dbReference type="ChEBI" id="CHEBI:15378"/>
        <dbReference type="ChEBI" id="CHEBI:57597"/>
        <dbReference type="ChEBI" id="CHEBI:57642"/>
        <dbReference type="ChEBI" id="CHEBI:57783"/>
        <dbReference type="ChEBI" id="CHEBI:58349"/>
        <dbReference type="EC" id="1.1.1.94"/>
    </reaction>
    <physiologicalReaction direction="right-to-left" evidence="1">
        <dbReference type="Rhea" id="RHEA:11098"/>
    </physiologicalReaction>
</comment>
<comment type="pathway">
    <text evidence="1">Membrane lipid metabolism; glycerophospholipid metabolism.</text>
</comment>
<comment type="subcellular location">
    <subcellularLocation>
        <location evidence="1">Cytoplasm</location>
    </subcellularLocation>
</comment>
<comment type="similarity">
    <text evidence="1">Belongs to the NAD-dependent glycerol-3-phosphate dehydrogenase family.</text>
</comment>
<comment type="sequence caution" evidence="2">
    <conflict type="erroneous initiation">
        <sequence resource="EMBL-CDS" id="ABC45556"/>
    </conflict>
</comment>
<name>GPDA2_SALRD</name>
<sequence>MSTSITLFGAGSWGTALAVHLAAAGRDVTLWARRDEAVERMRTTHRNPTYLSDIEIPPSVHVTSDLEAAAGASSLWAVAVPSQNLRSVATRIAPLTRPGTTVVSLAKGIENETLQTMSQVLADELGGMEAQQIGVLYGPSHAEEVAENQPTTLVAAAPTEPRAEWVQDAFMTERLRVYVNTDVVGVEIGGSAKNVLAIAAGIGDGVGYGDNAKAALVTRGLAEIRRLGIAMGAKPRTFAGLAGIGDLLVTCMSPHSRNRYLGEQIGNGMTLEEIESEMDMVAEGVRTTQSVQDLARHHDIEMPVTEAVHRVLFENRRPEDMVDELMTRSAKREHWLPQGLRNVS</sequence>
<keyword id="KW-0963">Cytoplasm</keyword>
<keyword id="KW-0444">Lipid biosynthesis</keyword>
<keyword id="KW-0443">Lipid metabolism</keyword>
<keyword id="KW-0520">NAD</keyword>
<keyword id="KW-0521">NADP</keyword>
<keyword id="KW-0547">Nucleotide-binding</keyword>
<keyword id="KW-0560">Oxidoreductase</keyword>
<keyword id="KW-0594">Phospholipid biosynthesis</keyword>
<keyword id="KW-1208">Phospholipid metabolism</keyword>
<keyword id="KW-1185">Reference proteome</keyword>
<gene>
    <name evidence="1" type="primary">gpsA2</name>
    <name type="ordered locus">SRU_1481</name>
</gene>
<protein>
    <recommendedName>
        <fullName evidence="1">Glycerol-3-phosphate dehydrogenase [NAD(P)+] 2</fullName>
        <ecNumber evidence="1">1.1.1.94</ecNumber>
    </recommendedName>
    <alternativeName>
        <fullName evidence="1">NAD(P)(+)-dependent glycerol-3-phosphate dehydrogenase 2</fullName>
    </alternativeName>
    <alternativeName>
        <fullName evidence="1">NAD(P)H-dependent dihydroxyacetone-phosphate reductase 2</fullName>
    </alternativeName>
</protein>
<proteinExistence type="inferred from homology"/>
<accession>Q2S2H6</accession>